<organism>
    <name type="scientific">Rhodopseudomonas palustris (strain TIE-1)</name>
    <dbReference type="NCBI Taxonomy" id="395960"/>
    <lineage>
        <taxon>Bacteria</taxon>
        <taxon>Pseudomonadati</taxon>
        <taxon>Pseudomonadota</taxon>
        <taxon>Alphaproteobacteria</taxon>
        <taxon>Hyphomicrobiales</taxon>
        <taxon>Nitrobacteraceae</taxon>
        <taxon>Rhodopseudomonas</taxon>
    </lineage>
</organism>
<feature type="chain" id="PRO_1000097618" description="3-dehydroquinate dehydratase">
    <location>
        <begin position="1"/>
        <end position="151"/>
    </location>
</feature>
<feature type="active site" description="Proton acceptor" evidence="1">
    <location>
        <position position="24"/>
    </location>
</feature>
<feature type="active site" description="Proton donor" evidence="1">
    <location>
        <position position="102"/>
    </location>
</feature>
<feature type="binding site" evidence="1">
    <location>
        <position position="76"/>
    </location>
    <ligand>
        <name>substrate</name>
    </ligand>
</feature>
<feature type="binding site" evidence="1">
    <location>
        <position position="82"/>
    </location>
    <ligand>
        <name>substrate</name>
    </ligand>
</feature>
<feature type="binding site" evidence="1">
    <location>
        <position position="89"/>
    </location>
    <ligand>
        <name>substrate</name>
    </ligand>
</feature>
<feature type="binding site" evidence="1">
    <location>
        <begin position="103"/>
        <end position="104"/>
    </location>
    <ligand>
        <name>substrate</name>
    </ligand>
</feature>
<feature type="binding site" evidence="1">
    <location>
        <position position="113"/>
    </location>
    <ligand>
        <name>substrate</name>
    </ligand>
</feature>
<feature type="site" description="Transition state stabilizer" evidence="1">
    <location>
        <position position="19"/>
    </location>
</feature>
<dbReference type="EC" id="4.2.1.10" evidence="1"/>
<dbReference type="EMBL" id="CP001096">
    <property type="protein sequence ID" value="ACF01224.1"/>
    <property type="molecule type" value="Genomic_DNA"/>
</dbReference>
<dbReference type="RefSeq" id="WP_012495928.1">
    <property type="nucleotide sequence ID" value="NC_011004.1"/>
</dbReference>
<dbReference type="SMR" id="B3QH35"/>
<dbReference type="KEGG" id="rpt:Rpal_2715"/>
<dbReference type="HOGENOM" id="CLU_090968_2_0_5"/>
<dbReference type="OrthoDB" id="9790793at2"/>
<dbReference type="UniPathway" id="UPA00053">
    <property type="reaction ID" value="UER00086"/>
</dbReference>
<dbReference type="Proteomes" id="UP000001725">
    <property type="component" value="Chromosome"/>
</dbReference>
<dbReference type="GO" id="GO:0003855">
    <property type="term" value="F:3-dehydroquinate dehydratase activity"/>
    <property type="evidence" value="ECO:0007669"/>
    <property type="project" value="UniProtKB-UniRule"/>
</dbReference>
<dbReference type="GO" id="GO:0008652">
    <property type="term" value="P:amino acid biosynthetic process"/>
    <property type="evidence" value="ECO:0007669"/>
    <property type="project" value="UniProtKB-KW"/>
</dbReference>
<dbReference type="GO" id="GO:0009073">
    <property type="term" value="P:aromatic amino acid family biosynthetic process"/>
    <property type="evidence" value="ECO:0007669"/>
    <property type="project" value="UniProtKB-KW"/>
</dbReference>
<dbReference type="GO" id="GO:0009423">
    <property type="term" value="P:chorismate biosynthetic process"/>
    <property type="evidence" value="ECO:0007669"/>
    <property type="project" value="UniProtKB-UniRule"/>
</dbReference>
<dbReference type="GO" id="GO:0019631">
    <property type="term" value="P:quinate catabolic process"/>
    <property type="evidence" value="ECO:0007669"/>
    <property type="project" value="TreeGrafter"/>
</dbReference>
<dbReference type="CDD" id="cd00466">
    <property type="entry name" value="DHQase_II"/>
    <property type="match status" value="1"/>
</dbReference>
<dbReference type="Gene3D" id="3.40.50.9100">
    <property type="entry name" value="Dehydroquinase, class II"/>
    <property type="match status" value="1"/>
</dbReference>
<dbReference type="HAMAP" id="MF_00169">
    <property type="entry name" value="AroQ"/>
    <property type="match status" value="1"/>
</dbReference>
<dbReference type="InterPro" id="IPR001874">
    <property type="entry name" value="DHquinase_II"/>
</dbReference>
<dbReference type="InterPro" id="IPR018509">
    <property type="entry name" value="DHquinase_II_CS"/>
</dbReference>
<dbReference type="InterPro" id="IPR036441">
    <property type="entry name" value="DHquinase_II_sf"/>
</dbReference>
<dbReference type="NCBIfam" id="TIGR01088">
    <property type="entry name" value="aroQ"/>
    <property type="match status" value="1"/>
</dbReference>
<dbReference type="NCBIfam" id="NF003805">
    <property type="entry name" value="PRK05395.1-2"/>
    <property type="match status" value="1"/>
</dbReference>
<dbReference type="NCBIfam" id="NF003806">
    <property type="entry name" value="PRK05395.1-3"/>
    <property type="match status" value="1"/>
</dbReference>
<dbReference type="NCBIfam" id="NF003807">
    <property type="entry name" value="PRK05395.1-4"/>
    <property type="match status" value="1"/>
</dbReference>
<dbReference type="PANTHER" id="PTHR21272">
    <property type="entry name" value="CATABOLIC 3-DEHYDROQUINASE"/>
    <property type="match status" value="1"/>
</dbReference>
<dbReference type="PANTHER" id="PTHR21272:SF3">
    <property type="entry name" value="CATABOLIC 3-DEHYDROQUINASE"/>
    <property type="match status" value="1"/>
</dbReference>
<dbReference type="Pfam" id="PF01220">
    <property type="entry name" value="DHquinase_II"/>
    <property type="match status" value="1"/>
</dbReference>
<dbReference type="PIRSF" id="PIRSF001399">
    <property type="entry name" value="DHquinase_II"/>
    <property type="match status" value="1"/>
</dbReference>
<dbReference type="SUPFAM" id="SSF52304">
    <property type="entry name" value="Type II 3-dehydroquinate dehydratase"/>
    <property type="match status" value="1"/>
</dbReference>
<dbReference type="PROSITE" id="PS01029">
    <property type="entry name" value="DEHYDROQUINASE_II"/>
    <property type="match status" value="1"/>
</dbReference>
<evidence type="ECO:0000255" key="1">
    <source>
        <dbReference type="HAMAP-Rule" id="MF_00169"/>
    </source>
</evidence>
<accession>B3QH35</accession>
<comment type="function">
    <text evidence="1">Catalyzes a trans-dehydration via an enolate intermediate.</text>
</comment>
<comment type="catalytic activity">
    <reaction evidence="1">
        <text>3-dehydroquinate = 3-dehydroshikimate + H2O</text>
        <dbReference type="Rhea" id="RHEA:21096"/>
        <dbReference type="ChEBI" id="CHEBI:15377"/>
        <dbReference type="ChEBI" id="CHEBI:16630"/>
        <dbReference type="ChEBI" id="CHEBI:32364"/>
        <dbReference type="EC" id="4.2.1.10"/>
    </reaction>
</comment>
<comment type="pathway">
    <text evidence="1">Metabolic intermediate biosynthesis; chorismate biosynthesis; chorismate from D-erythrose 4-phosphate and phosphoenolpyruvate: step 3/7.</text>
</comment>
<comment type="subunit">
    <text evidence="1">Homododecamer.</text>
</comment>
<comment type="similarity">
    <text evidence="1">Belongs to the type-II 3-dehydroquinase family.</text>
</comment>
<gene>
    <name evidence="1" type="primary">aroQ</name>
    <name type="ordered locus">Rpal_2715</name>
</gene>
<proteinExistence type="inferred from homology"/>
<keyword id="KW-0028">Amino-acid biosynthesis</keyword>
<keyword id="KW-0057">Aromatic amino acid biosynthesis</keyword>
<keyword id="KW-0456">Lyase</keyword>
<reference key="1">
    <citation type="submission" date="2008-05" db="EMBL/GenBank/DDBJ databases">
        <title>Complete sequence of Rhodopseudomonas palustris TIE-1.</title>
        <authorList>
            <consortium name="US DOE Joint Genome Institute"/>
            <person name="Lucas S."/>
            <person name="Copeland A."/>
            <person name="Lapidus A."/>
            <person name="Glavina del Rio T."/>
            <person name="Dalin E."/>
            <person name="Tice H."/>
            <person name="Pitluck S."/>
            <person name="Chain P."/>
            <person name="Malfatti S."/>
            <person name="Shin M."/>
            <person name="Vergez L."/>
            <person name="Lang D."/>
            <person name="Schmutz J."/>
            <person name="Larimer F."/>
            <person name="Land M."/>
            <person name="Hauser L."/>
            <person name="Kyrpides N."/>
            <person name="Mikhailova N."/>
            <person name="Emerson D."/>
            <person name="Newman D.K."/>
            <person name="Roden E."/>
            <person name="Richardson P."/>
        </authorList>
    </citation>
    <scope>NUCLEOTIDE SEQUENCE [LARGE SCALE GENOMIC DNA]</scope>
    <source>
        <strain>TIE-1</strain>
    </source>
</reference>
<protein>
    <recommendedName>
        <fullName evidence="1">3-dehydroquinate dehydratase</fullName>
        <shortName evidence="1">3-dehydroquinase</shortName>
        <ecNumber evidence="1">4.2.1.10</ecNumber>
    </recommendedName>
    <alternativeName>
        <fullName evidence="1">Type II DHQase</fullName>
    </alternativeName>
</protein>
<name>AROQ_RHOPT</name>
<sequence length="151" mass="16000">MAQTIYVLNGPNLNLLGTREPEIYGRATLADVEKLCAETAAGFGLVAVCRQSNHEGQLIDWIHQARSEKVAGLVINAGGYTHTSIALHDALVGVQIPTVEVHVSNVFAREDFRHHSFIAKAAFASLCGFGIDGYRLAITGLAAKLGASATA</sequence>